<name>SECF_PROMA</name>
<proteinExistence type="inferred from homology"/>
<sequence length="321" mass="35623">MSFTPKNLNVKYTFNVSRNRSKVWLISGFAVLISFLGFFFSWTNQSIGFPLRPGFDFTGGTQIILERKCDSECNKITTINISEAFNNAKFSNQETSQKLFDARIQFLDGYKSLLIRSPELSPSESKEVIESIEFVAGPLEDGGQSVESIGPTLGAKLLQTTLISLLVAFSCVAIYISIRFDRMFSLYALLALFHDVLIVCGVFSWLGIINEVEVNSLFAVALLTIAGYSVNDTVVVFDRIREINKQESRMNFKQKVDFAVSATLTRTLYTSGTTLLPLIALIFFGGTTLYWFAIALALGVVVGSWSSIALVPSLLTLRKEN</sequence>
<feature type="chain" id="PRO_0000412700" description="Protein translocase subunit SecF">
    <location>
        <begin position="1"/>
        <end position="321"/>
    </location>
</feature>
<feature type="transmembrane region" description="Helical" evidence="1">
    <location>
        <begin position="23"/>
        <end position="43"/>
    </location>
</feature>
<feature type="transmembrane region" description="Helical" evidence="1">
    <location>
        <begin position="158"/>
        <end position="178"/>
    </location>
</feature>
<feature type="transmembrane region" description="Helical" evidence="1">
    <location>
        <begin position="189"/>
        <end position="209"/>
    </location>
</feature>
<feature type="transmembrane region" description="Helical" evidence="1">
    <location>
        <begin position="217"/>
        <end position="237"/>
    </location>
</feature>
<feature type="transmembrane region" description="Helical" evidence="1">
    <location>
        <begin position="258"/>
        <end position="280"/>
    </location>
</feature>
<feature type="transmembrane region" description="Helical" evidence="1">
    <location>
        <begin position="290"/>
        <end position="312"/>
    </location>
</feature>
<keyword id="KW-0997">Cell inner membrane</keyword>
<keyword id="KW-1003">Cell membrane</keyword>
<keyword id="KW-0472">Membrane</keyword>
<keyword id="KW-0653">Protein transport</keyword>
<keyword id="KW-1185">Reference proteome</keyword>
<keyword id="KW-0811">Translocation</keyword>
<keyword id="KW-0812">Transmembrane</keyword>
<keyword id="KW-1133">Transmembrane helix</keyword>
<keyword id="KW-0813">Transport</keyword>
<comment type="function">
    <text evidence="1">Part of the Sec protein translocase complex. Interacts with the SecYEG preprotein conducting channel. SecDF uses the proton motive force (PMF) to complete protein translocation after the ATP-dependent function of SecA.</text>
</comment>
<comment type="function">
    <text evidence="1">Probably participates in protein translocation into and across both the cytoplasmic and thylakoid membranes in cyanobacterial cells.</text>
</comment>
<comment type="subunit">
    <text evidence="1">Forms a complex with SecD. Part of the essential Sec protein translocation apparatus which comprises SecA, SecYEG and auxiliary proteins SecDF. Other proteins may also be involved.</text>
</comment>
<comment type="subcellular location">
    <subcellularLocation>
        <location evidence="1">Cell inner membrane</location>
        <topology evidence="1">Multi-pass membrane protein</topology>
    </subcellularLocation>
</comment>
<comment type="similarity">
    <text evidence="1">Belongs to the SecD/SecF family. SecF subfamily.</text>
</comment>
<accession>Q7VCH2</accession>
<protein>
    <recommendedName>
        <fullName>Protein translocase subunit SecF</fullName>
    </recommendedName>
</protein>
<organism>
    <name type="scientific">Prochlorococcus marinus (strain SARG / CCMP1375 / SS120)</name>
    <dbReference type="NCBI Taxonomy" id="167539"/>
    <lineage>
        <taxon>Bacteria</taxon>
        <taxon>Bacillati</taxon>
        <taxon>Cyanobacteriota</taxon>
        <taxon>Cyanophyceae</taxon>
        <taxon>Synechococcales</taxon>
        <taxon>Prochlorococcaceae</taxon>
        <taxon>Prochlorococcus</taxon>
    </lineage>
</organism>
<gene>
    <name evidence="1" type="primary">secF</name>
    <name type="ordered locus">Pro_0768</name>
</gene>
<evidence type="ECO:0000255" key="1">
    <source>
        <dbReference type="HAMAP-Rule" id="MF_01464"/>
    </source>
</evidence>
<dbReference type="EMBL" id="AE017126">
    <property type="protein sequence ID" value="AAP99812.1"/>
    <property type="molecule type" value="Genomic_DNA"/>
</dbReference>
<dbReference type="RefSeq" id="NP_875160.1">
    <property type="nucleotide sequence ID" value="NC_005042.1"/>
</dbReference>
<dbReference type="RefSeq" id="WP_011124920.1">
    <property type="nucleotide sequence ID" value="NC_005042.1"/>
</dbReference>
<dbReference type="SMR" id="Q7VCH2"/>
<dbReference type="STRING" id="167539.Pro_0768"/>
<dbReference type="EnsemblBacteria" id="AAP99812">
    <property type="protein sequence ID" value="AAP99812"/>
    <property type="gene ID" value="Pro_0768"/>
</dbReference>
<dbReference type="KEGG" id="pma:Pro_0768"/>
<dbReference type="PATRIC" id="fig|167539.5.peg.813"/>
<dbReference type="eggNOG" id="COG0341">
    <property type="taxonomic scope" value="Bacteria"/>
</dbReference>
<dbReference type="HOGENOM" id="CLU_050012_0_0_3"/>
<dbReference type="OrthoDB" id="9805019at2"/>
<dbReference type="Proteomes" id="UP000001420">
    <property type="component" value="Chromosome"/>
</dbReference>
<dbReference type="GO" id="GO:0005886">
    <property type="term" value="C:plasma membrane"/>
    <property type="evidence" value="ECO:0007669"/>
    <property type="project" value="UniProtKB-SubCell"/>
</dbReference>
<dbReference type="GO" id="GO:0015450">
    <property type="term" value="F:protein-transporting ATPase activity"/>
    <property type="evidence" value="ECO:0007669"/>
    <property type="project" value="InterPro"/>
</dbReference>
<dbReference type="GO" id="GO:0065002">
    <property type="term" value="P:intracellular protein transmembrane transport"/>
    <property type="evidence" value="ECO:0007669"/>
    <property type="project" value="UniProtKB-UniRule"/>
</dbReference>
<dbReference type="GO" id="GO:0006605">
    <property type="term" value="P:protein targeting"/>
    <property type="evidence" value="ECO:0007669"/>
    <property type="project" value="UniProtKB-UniRule"/>
</dbReference>
<dbReference type="GO" id="GO:0043952">
    <property type="term" value="P:protein transport by the Sec complex"/>
    <property type="evidence" value="ECO:0007669"/>
    <property type="project" value="UniProtKB-UniRule"/>
</dbReference>
<dbReference type="Gene3D" id="1.20.1640.10">
    <property type="entry name" value="Multidrug efflux transporter AcrB transmembrane domain"/>
    <property type="match status" value="1"/>
</dbReference>
<dbReference type="HAMAP" id="MF_01464_B">
    <property type="entry name" value="SecF_B"/>
    <property type="match status" value="1"/>
</dbReference>
<dbReference type="InterPro" id="IPR022813">
    <property type="entry name" value="SecD/SecF_arch_bac"/>
</dbReference>
<dbReference type="InterPro" id="IPR022645">
    <property type="entry name" value="SecD/SecF_bac"/>
</dbReference>
<dbReference type="InterPro" id="IPR048634">
    <property type="entry name" value="SecD_SecF_C"/>
</dbReference>
<dbReference type="InterPro" id="IPR005665">
    <property type="entry name" value="SecF_bac"/>
</dbReference>
<dbReference type="NCBIfam" id="TIGR00966">
    <property type="entry name" value="transloc_SecF"/>
    <property type="match status" value="1"/>
</dbReference>
<dbReference type="PANTHER" id="PTHR30081:SF8">
    <property type="entry name" value="PROTEIN TRANSLOCASE SUBUNIT SECF"/>
    <property type="match status" value="1"/>
</dbReference>
<dbReference type="PANTHER" id="PTHR30081">
    <property type="entry name" value="PROTEIN-EXPORT MEMBRANE PROTEIN SEC"/>
    <property type="match status" value="1"/>
</dbReference>
<dbReference type="Pfam" id="PF02355">
    <property type="entry name" value="SecD_SecF_C"/>
    <property type="match status" value="1"/>
</dbReference>
<dbReference type="PRINTS" id="PR01755">
    <property type="entry name" value="SECFTRNLCASE"/>
</dbReference>
<dbReference type="SUPFAM" id="SSF82866">
    <property type="entry name" value="Multidrug efflux transporter AcrB transmembrane domain"/>
    <property type="match status" value="1"/>
</dbReference>
<reference key="1">
    <citation type="journal article" date="2003" name="Proc. Natl. Acad. Sci. U.S.A.">
        <title>Genome sequence of the cyanobacterium Prochlorococcus marinus SS120, a nearly minimal oxyphototrophic genome.</title>
        <authorList>
            <person name="Dufresne A."/>
            <person name="Salanoubat M."/>
            <person name="Partensky F."/>
            <person name="Artiguenave F."/>
            <person name="Axmann I.M."/>
            <person name="Barbe V."/>
            <person name="Duprat S."/>
            <person name="Galperin M.Y."/>
            <person name="Koonin E.V."/>
            <person name="Le Gall F."/>
            <person name="Makarova K.S."/>
            <person name="Ostrowski M."/>
            <person name="Oztas S."/>
            <person name="Robert C."/>
            <person name="Rogozin I.B."/>
            <person name="Scanlan D.J."/>
            <person name="Tandeau de Marsac N."/>
            <person name="Weissenbach J."/>
            <person name="Wincker P."/>
            <person name="Wolf Y.I."/>
            <person name="Hess W.R."/>
        </authorList>
    </citation>
    <scope>NUCLEOTIDE SEQUENCE [LARGE SCALE GENOMIC DNA]</scope>
    <source>
        <strain>SARG / CCMP1375 / SS120</strain>
    </source>
</reference>